<organism>
    <name type="scientific">Rhizobium rhizogenes (strain K84 / ATCC BAA-868)</name>
    <name type="common">Agrobacterium radiobacter</name>
    <dbReference type="NCBI Taxonomy" id="311403"/>
    <lineage>
        <taxon>Bacteria</taxon>
        <taxon>Pseudomonadati</taxon>
        <taxon>Pseudomonadota</taxon>
        <taxon>Alphaproteobacteria</taxon>
        <taxon>Hyphomicrobiales</taxon>
        <taxon>Rhizobiaceae</taxon>
        <taxon>Rhizobium/Agrobacterium group</taxon>
        <taxon>Rhizobium</taxon>
    </lineage>
</organism>
<name>NUOB_RHIR8</name>
<keyword id="KW-0004">4Fe-4S</keyword>
<keyword id="KW-0997">Cell inner membrane</keyword>
<keyword id="KW-1003">Cell membrane</keyword>
<keyword id="KW-0408">Iron</keyword>
<keyword id="KW-0411">Iron-sulfur</keyword>
<keyword id="KW-0472">Membrane</keyword>
<keyword id="KW-0479">Metal-binding</keyword>
<keyword id="KW-0520">NAD</keyword>
<keyword id="KW-0874">Quinone</keyword>
<keyword id="KW-1278">Translocase</keyword>
<keyword id="KW-0813">Transport</keyword>
<keyword id="KW-0830">Ubiquinone</keyword>
<accession>B9JD43</accession>
<sequence>MGVAQSNTTLVAPQPKGIIDPATGKPVGSNDPFFGEINNELADKGFLVTSTDELINWARTGSLMWMTFGLACCAVEMMQVSMPRYDVERFGFAPRASPRQSDVMIVAGTLTNKMAPALRKVYDQMPEPRYVISMGSCANGGGYYHYSYSVVRGCDRIVPIDIYIPGCPPTAEALLYGVLLLQKKIRRTGTIER</sequence>
<comment type="function">
    <text evidence="1">NDH-1 shuttles electrons from NADH, via FMN and iron-sulfur (Fe-S) centers, to quinones in the respiratory chain. The immediate electron acceptor for the enzyme in this species is believed to be ubiquinone. Couples the redox reaction to proton translocation (for every two electrons transferred, four hydrogen ions are translocated across the cytoplasmic membrane), and thus conserves the redox energy in a proton gradient.</text>
</comment>
<comment type="catalytic activity">
    <reaction evidence="1">
        <text>a quinone + NADH + 5 H(+)(in) = a quinol + NAD(+) + 4 H(+)(out)</text>
        <dbReference type="Rhea" id="RHEA:57888"/>
        <dbReference type="ChEBI" id="CHEBI:15378"/>
        <dbReference type="ChEBI" id="CHEBI:24646"/>
        <dbReference type="ChEBI" id="CHEBI:57540"/>
        <dbReference type="ChEBI" id="CHEBI:57945"/>
        <dbReference type="ChEBI" id="CHEBI:132124"/>
    </reaction>
</comment>
<comment type="cofactor">
    <cofactor evidence="1">
        <name>[4Fe-4S] cluster</name>
        <dbReference type="ChEBI" id="CHEBI:49883"/>
    </cofactor>
    <text evidence="1">Binds 1 [4Fe-4S] cluster.</text>
</comment>
<comment type="subunit">
    <text evidence="1">NDH-1 is composed of 14 different subunits. Subunits NuoB, C, D, E, F, and G constitute the peripheral sector of the complex.</text>
</comment>
<comment type="subcellular location">
    <subcellularLocation>
        <location evidence="1">Cell inner membrane</location>
        <topology evidence="1">Peripheral membrane protein</topology>
        <orientation evidence="1">Cytoplasmic side</orientation>
    </subcellularLocation>
</comment>
<comment type="similarity">
    <text evidence="1">Belongs to the complex I 20 kDa subunit family.</text>
</comment>
<gene>
    <name evidence="1" type="primary">nuoB</name>
    <name type="ordered locus">Arad_1843</name>
</gene>
<evidence type="ECO:0000255" key="1">
    <source>
        <dbReference type="HAMAP-Rule" id="MF_01356"/>
    </source>
</evidence>
<proteinExistence type="inferred from homology"/>
<reference key="1">
    <citation type="journal article" date="2009" name="J. Bacteriol.">
        <title>Genome sequences of three Agrobacterium biovars help elucidate the evolution of multichromosome genomes in bacteria.</title>
        <authorList>
            <person name="Slater S.C."/>
            <person name="Goldman B.S."/>
            <person name="Goodner B."/>
            <person name="Setubal J.C."/>
            <person name="Farrand S.K."/>
            <person name="Nester E.W."/>
            <person name="Burr T.J."/>
            <person name="Banta L."/>
            <person name="Dickerman A.W."/>
            <person name="Paulsen I."/>
            <person name="Otten L."/>
            <person name="Suen G."/>
            <person name="Welch R."/>
            <person name="Almeida N.F."/>
            <person name="Arnold F."/>
            <person name="Burton O.T."/>
            <person name="Du Z."/>
            <person name="Ewing A."/>
            <person name="Godsy E."/>
            <person name="Heisel S."/>
            <person name="Houmiel K.L."/>
            <person name="Jhaveri J."/>
            <person name="Lu J."/>
            <person name="Miller N.M."/>
            <person name="Norton S."/>
            <person name="Chen Q."/>
            <person name="Phoolcharoen W."/>
            <person name="Ohlin V."/>
            <person name="Ondrusek D."/>
            <person name="Pride N."/>
            <person name="Stricklin S.L."/>
            <person name="Sun J."/>
            <person name="Wheeler C."/>
            <person name="Wilson L."/>
            <person name="Zhu H."/>
            <person name="Wood D.W."/>
        </authorList>
    </citation>
    <scope>NUCLEOTIDE SEQUENCE [LARGE SCALE GENOMIC DNA]</scope>
    <source>
        <strain>K84 / ATCC BAA-868</strain>
    </source>
</reference>
<dbReference type="EC" id="7.1.1.-" evidence="1"/>
<dbReference type="EMBL" id="CP000628">
    <property type="protein sequence ID" value="ACM26180.1"/>
    <property type="molecule type" value="Genomic_DNA"/>
</dbReference>
<dbReference type="RefSeq" id="WP_007689948.1">
    <property type="nucleotide sequence ID" value="NC_011985.1"/>
</dbReference>
<dbReference type="SMR" id="B9JD43"/>
<dbReference type="STRING" id="311403.Arad_1843"/>
<dbReference type="KEGG" id="ara:Arad_1843"/>
<dbReference type="eggNOG" id="COG0377">
    <property type="taxonomic scope" value="Bacteria"/>
</dbReference>
<dbReference type="HOGENOM" id="CLU_055737_7_0_5"/>
<dbReference type="Proteomes" id="UP000001600">
    <property type="component" value="Chromosome 1"/>
</dbReference>
<dbReference type="GO" id="GO:0005886">
    <property type="term" value="C:plasma membrane"/>
    <property type="evidence" value="ECO:0007669"/>
    <property type="project" value="UniProtKB-SubCell"/>
</dbReference>
<dbReference type="GO" id="GO:0045271">
    <property type="term" value="C:respiratory chain complex I"/>
    <property type="evidence" value="ECO:0007669"/>
    <property type="project" value="TreeGrafter"/>
</dbReference>
<dbReference type="GO" id="GO:0051539">
    <property type="term" value="F:4 iron, 4 sulfur cluster binding"/>
    <property type="evidence" value="ECO:0007669"/>
    <property type="project" value="UniProtKB-KW"/>
</dbReference>
<dbReference type="GO" id="GO:0005506">
    <property type="term" value="F:iron ion binding"/>
    <property type="evidence" value="ECO:0007669"/>
    <property type="project" value="UniProtKB-UniRule"/>
</dbReference>
<dbReference type="GO" id="GO:0008137">
    <property type="term" value="F:NADH dehydrogenase (ubiquinone) activity"/>
    <property type="evidence" value="ECO:0007669"/>
    <property type="project" value="InterPro"/>
</dbReference>
<dbReference type="GO" id="GO:0050136">
    <property type="term" value="F:NADH:ubiquinone reductase (non-electrogenic) activity"/>
    <property type="evidence" value="ECO:0007669"/>
    <property type="project" value="UniProtKB-UniRule"/>
</dbReference>
<dbReference type="GO" id="GO:0048038">
    <property type="term" value="F:quinone binding"/>
    <property type="evidence" value="ECO:0007669"/>
    <property type="project" value="UniProtKB-KW"/>
</dbReference>
<dbReference type="GO" id="GO:0009060">
    <property type="term" value="P:aerobic respiration"/>
    <property type="evidence" value="ECO:0007669"/>
    <property type="project" value="TreeGrafter"/>
</dbReference>
<dbReference type="GO" id="GO:0015990">
    <property type="term" value="P:electron transport coupled proton transport"/>
    <property type="evidence" value="ECO:0007669"/>
    <property type="project" value="TreeGrafter"/>
</dbReference>
<dbReference type="FunFam" id="3.40.50.12280:FF:000001">
    <property type="entry name" value="NADH-quinone oxidoreductase subunit B 2"/>
    <property type="match status" value="1"/>
</dbReference>
<dbReference type="Gene3D" id="3.40.50.12280">
    <property type="match status" value="1"/>
</dbReference>
<dbReference type="HAMAP" id="MF_01356">
    <property type="entry name" value="NDH1_NuoB"/>
    <property type="match status" value="1"/>
</dbReference>
<dbReference type="InterPro" id="IPR006137">
    <property type="entry name" value="NADH_UbQ_OxRdtase-like_20kDa"/>
</dbReference>
<dbReference type="InterPro" id="IPR006138">
    <property type="entry name" value="NADH_UQ_OxRdtase_20Kd_su"/>
</dbReference>
<dbReference type="NCBIfam" id="TIGR01957">
    <property type="entry name" value="nuoB_fam"/>
    <property type="match status" value="1"/>
</dbReference>
<dbReference type="NCBIfam" id="NF005012">
    <property type="entry name" value="PRK06411.1"/>
    <property type="match status" value="1"/>
</dbReference>
<dbReference type="PANTHER" id="PTHR11995">
    <property type="entry name" value="NADH DEHYDROGENASE"/>
    <property type="match status" value="1"/>
</dbReference>
<dbReference type="PANTHER" id="PTHR11995:SF14">
    <property type="entry name" value="NADH DEHYDROGENASE [UBIQUINONE] IRON-SULFUR PROTEIN 7, MITOCHONDRIAL"/>
    <property type="match status" value="1"/>
</dbReference>
<dbReference type="Pfam" id="PF01058">
    <property type="entry name" value="Oxidored_q6"/>
    <property type="match status" value="1"/>
</dbReference>
<dbReference type="SUPFAM" id="SSF56770">
    <property type="entry name" value="HydA/Nqo6-like"/>
    <property type="match status" value="1"/>
</dbReference>
<dbReference type="PROSITE" id="PS01150">
    <property type="entry name" value="COMPLEX1_20K"/>
    <property type="match status" value="1"/>
</dbReference>
<feature type="chain" id="PRO_0000376113" description="NADH-quinone oxidoreductase subunit B">
    <location>
        <begin position="1"/>
        <end position="193"/>
    </location>
</feature>
<feature type="binding site" evidence="1">
    <location>
        <position position="72"/>
    </location>
    <ligand>
        <name>[4Fe-4S] cluster</name>
        <dbReference type="ChEBI" id="CHEBI:49883"/>
    </ligand>
</feature>
<feature type="binding site" evidence="1">
    <location>
        <position position="73"/>
    </location>
    <ligand>
        <name>[4Fe-4S] cluster</name>
        <dbReference type="ChEBI" id="CHEBI:49883"/>
    </ligand>
</feature>
<feature type="binding site" evidence="1">
    <location>
        <position position="137"/>
    </location>
    <ligand>
        <name>[4Fe-4S] cluster</name>
        <dbReference type="ChEBI" id="CHEBI:49883"/>
    </ligand>
</feature>
<feature type="binding site" evidence="1">
    <location>
        <position position="167"/>
    </location>
    <ligand>
        <name>[4Fe-4S] cluster</name>
        <dbReference type="ChEBI" id="CHEBI:49883"/>
    </ligand>
</feature>
<protein>
    <recommendedName>
        <fullName evidence="1">NADH-quinone oxidoreductase subunit B</fullName>
        <ecNumber evidence="1">7.1.1.-</ecNumber>
    </recommendedName>
    <alternativeName>
        <fullName evidence="1">NADH dehydrogenase I subunit B</fullName>
    </alternativeName>
    <alternativeName>
        <fullName evidence="1">NDH-1 subunit B</fullName>
    </alternativeName>
</protein>